<name>EFTU_NITSB</name>
<proteinExistence type="inferred from homology"/>
<accession>A6Q1L5</accession>
<gene>
    <name evidence="2" type="primary">tuf</name>
    <name type="ordered locus">NIS_0260</name>
</gene>
<sequence>MAKEKFVKTKPHVNIGTIGHVDHGKTTLTAAITAVLAEKGYAEKRDYDQIDNAPEERERGITIATSHVEYETDKRHYAHVDCPGHADYVKNMITGAAQMDGAILVVSAADGPMPQTREHILLARQVGVPYIVVFLNKEDMVDDPELLELVEMEVRELLNEYDFPGDDVPVIAGSALKALEEAKEGKLGEWSEKILKLMEAVDEYIPTPERDIDKPFLMPIEDVFSISGRGTVVTGRIERGVVKVGDEIEIVGLRPTQKTTVTGVEMFRKELDQGEAGDNVGVLLRGTKKEEVERGQVLAQPGTITPHTKFEAEIYVLTKEEGGRHTPFFSGYRPQFYVRTTDVTGTITLPEGVEMVMPGDNVKINAELIAPIALEEGTRFAIREGGRTVGAGVVSKIIE</sequence>
<comment type="function">
    <text evidence="2">GTP hydrolase that promotes the GTP-dependent binding of aminoacyl-tRNA to the A-site of ribosomes during protein biosynthesis.</text>
</comment>
<comment type="catalytic activity">
    <reaction evidence="2">
        <text>GTP + H2O = GDP + phosphate + H(+)</text>
        <dbReference type="Rhea" id="RHEA:19669"/>
        <dbReference type="ChEBI" id="CHEBI:15377"/>
        <dbReference type="ChEBI" id="CHEBI:15378"/>
        <dbReference type="ChEBI" id="CHEBI:37565"/>
        <dbReference type="ChEBI" id="CHEBI:43474"/>
        <dbReference type="ChEBI" id="CHEBI:58189"/>
        <dbReference type="EC" id="3.6.5.3"/>
    </reaction>
    <physiologicalReaction direction="left-to-right" evidence="2">
        <dbReference type="Rhea" id="RHEA:19670"/>
    </physiologicalReaction>
</comment>
<comment type="subunit">
    <text evidence="2">Monomer.</text>
</comment>
<comment type="subcellular location">
    <subcellularLocation>
        <location evidence="2">Cytoplasm</location>
    </subcellularLocation>
</comment>
<comment type="similarity">
    <text evidence="2">Belongs to the TRAFAC class translation factor GTPase superfamily. Classic translation factor GTPase family. EF-Tu/EF-1A subfamily.</text>
</comment>
<dbReference type="EC" id="3.6.5.3" evidence="2"/>
<dbReference type="EMBL" id="AP009178">
    <property type="protein sequence ID" value="BAF69374.1"/>
    <property type="molecule type" value="Genomic_DNA"/>
</dbReference>
<dbReference type="RefSeq" id="WP_012081637.1">
    <property type="nucleotide sequence ID" value="NC_009662.1"/>
</dbReference>
<dbReference type="SMR" id="A6Q1L5"/>
<dbReference type="FunCoup" id="A6Q1L5">
    <property type="interactions" value="501"/>
</dbReference>
<dbReference type="STRING" id="387092.NIS_0260"/>
<dbReference type="KEGG" id="nis:NIS_0260"/>
<dbReference type="eggNOG" id="COG0050">
    <property type="taxonomic scope" value="Bacteria"/>
</dbReference>
<dbReference type="HOGENOM" id="CLU_007265_0_0_7"/>
<dbReference type="InParanoid" id="A6Q1L5"/>
<dbReference type="OrthoDB" id="9803139at2"/>
<dbReference type="Proteomes" id="UP000001118">
    <property type="component" value="Chromosome"/>
</dbReference>
<dbReference type="GO" id="GO:0005829">
    <property type="term" value="C:cytosol"/>
    <property type="evidence" value="ECO:0007669"/>
    <property type="project" value="TreeGrafter"/>
</dbReference>
<dbReference type="GO" id="GO:0005525">
    <property type="term" value="F:GTP binding"/>
    <property type="evidence" value="ECO:0007669"/>
    <property type="project" value="UniProtKB-UniRule"/>
</dbReference>
<dbReference type="GO" id="GO:0003924">
    <property type="term" value="F:GTPase activity"/>
    <property type="evidence" value="ECO:0007669"/>
    <property type="project" value="InterPro"/>
</dbReference>
<dbReference type="GO" id="GO:0003746">
    <property type="term" value="F:translation elongation factor activity"/>
    <property type="evidence" value="ECO:0007669"/>
    <property type="project" value="UniProtKB-UniRule"/>
</dbReference>
<dbReference type="CDD" id="cd01884">
    <property type="entry name" value="EF_Tu"/>
    <property type="match status" value="1"/>
</dbReference>
<dbReference type="CDD" id="cd03697">
    <property type="entry name" value="EFTU_II"/>
    <property type="match status" value="1"/>
</dbReference>
<dbReference type="CDD" id="cd03707">
    <property type="entry name" value="EFTU_III"/>
    <property type="match status" value="1"/>
</dbReference>
<dbReference type="FunFam" id="2.40.30.10:FF:000001">
    <property type="entry name" value="Elongation factor Tu"/>
    <property type="match status" value="1"/>
</dbReference>
<dbReference type="FunFam" id="3.40.50.300:FF:000003">
    <property type="entry name" value="Elongation factor Tu"/>
    <property type="match status" value="1"/>
</dbReference>
<dbReference type="Gene3D" id="3.40.50.300">
    <property type="entry name" value="P-loop containing nucleotide triphosphate hydrolases"/>
    <property type="match status" value="1"/>
</dbReference>
<dbReference type="Gene3D" id="2.40.30.10">
    <property type="entry name" value="Translation factors"/>
    <property type="match status" value="2"/>
</dbReference>
<dbReference type="HAMAP" id="MF_00118_B">
    <property type="entry name" value="EF_Tu_B"/>
    <property type="match status" value="1"/>
</dbReference>
<dbReference type="InterPro" id="IPR041709">
    <property type="entry name" value="EF-Tu_GTP-bd"/>
</dbReference>
<dbReference type="InterPro" id="IPR050055">
    <property type="entry name" value="EF-Tu_GTPase"/>
</dbReference>
<dbReference type="InterPro" id="IPR004161">
    <property type="entry name" value="EFTu-like_2"/>
</dbReference>
<dbReference type="InterPro" id="IPR033720">
    <property type="entry name" value="EFTU_2"/>
</dbReference>
<dbReference type="InterPro" id="IPR031157">
    <property type="entry name" value="G_TR_CS"/>
</dbReference>
<dbReference type="InterPro" id="IPR027417">
    <property type="entry name" value="P-loop_NTPase"/>
</dbReference>
<dbReference type="InterPro" id="IPR005225">
    <property type="entry name" value="Small_GTP-bd"/>
</dbReference>
<dbReference type="InterPro" id="IPR000795">
    <property type="entry name" value="T_Tr_GTP-bd_dom"/>
</dbReference>
<dbReference type="InterPro" id="IPR009000">
    <property type="entry name" value="Transl_B-barrel_sf"/>
</dbReference>
<dbReference type="InterPro" id="IPR009001">
    <property type="entry name" value="Transl_elong_EF1A/Init_IF2_C"/>
</dbReference>
<dbReference type="InterPro" id="IPR004541">
    <property type="entry name" value="Transl_elong_EFTu/EF1A_bac/org"/>
</dbReference>
<dbReference type="InterPro" id="IPR004160">
    <property type="entry name" value="Transl_elong_EFTu/EF1A_C"/>
</dbReference>
<dbReference type="NCBIfam" id="TIGR00485">
    <property type="entry name" value="EF-Tu"/>
    <property type="match status" value="1"/>
</dbReference>
<dbReference type="NCBIfam" id="NF000766">
    <property type="entry name" value="PRK00049.1"/>
    <property type="match status" value="1"/>
</dbReference>
<dbReference type="NCBIfam" id="NF009372">
    <property type="entry name" value="PRK12735.1"/>
    <property type="match status" value="1"/>
</dbReference>
<dbReference type="NCBIfam" id="NF009373">
    <property type="entry name" value="PRK12736.1"/>
    <property type="match status" value="1"/>
</dbReference>
<dbReference type="NCBIfam" id="TIGR00231">
    <property type="entry name" value="small_GTP"/>
    <property type="match status" value="1"/>
</dbReference>
<dbReference type="PANTHER" id="PTHR43721:SF22">
    <property type="entry name" value="ELONGATION FACTOR TU, MITOCHONDRIAL"/>
    <property type="match status" value="1"/>
</dbReference>
<dbReference type="PANTHER" id="PTHR43721">
    <property type="entry name" value="ELONGATION FACTOR TU-RELATED"/>
    <property type="match status" value="1"/>
</dbReference>
<dbReference type="Pfam" id="PF00009">
    <property type="entry name" value="GTP_EFTU"/>
    <property type="match status" value="1"/>
</dbReference>
<dbReference type="Pfam" id="PF03144">
    <property type="entry name" value="GTP_EFTU_D2"/>
    <property type="match status" value="1"/>
</dbReference>
<dbReference type="Pfam" id="PF03143">
    <property type="entry name" value="GTP_EFTU_D3"/>
    <property type="match status" value="1"/>
</dbReference>
<dbReference type="PRINTS" id="PR00315">
    <property type="entry name" value="ELONGATNFCT"/>
</dbReference>
<dbReference type="SUPFAM" id="SSF50465">
    <property type="entry name" value="EF-Tu/eEF-1alpha/eIF2-gamma C-terminal domain"/>
    <property type="match status" value="1"/>
</dbReference>
<dbReference type="SUPFAM" id="SSF52540">
    <property type="entry name" value="P-loop containing nucleoside triphosphate hydrolases"/>
    <property type="match status" value="1"/>
</dbReference>
<dbReference type="SUPFAM" id="SSF50447">
    <property type="entry name" value="Translation proteins"/>
    <property type="match status" value="1"/>
</dbReference>
<dbReference type="PROSITE" id="PS00301">
    <property type="entry name" value="G_TR_1"/>
    <property type="match status" value="1"/>
</dbReference>
<dbReference type="PROSITE" id="PS51722">
    <property type="entry name" value="G_TR_2"/>
    <property type="match status" value="1"/>
</dbReference>
<keyword id="KW-0963">Cytoplasm</keyword>
<keyword id="KW-0251">Elongation factor</keyword>
<keyword id="KW-0342">GTP-binding</keyword>
<keyword id="KW-0378">Hydrolase</keyword>
<keyword id="KW-0460">Magnesium</keyword>
<keyword id="KW-0479">Metal-binding</keyword>
<keyword id="KW-0547">Nucleotide-binding</keyword>
<keyword id="KW-0648">Protein biosynthesis</keyword>
<keyword id="KW-1185">Reference proteome</keyword>
<evidence type="ECO:0000250" key="1"/>
<evidence type="ECO:0000255" key="2">
    <source>
        <dbReference type="HAMAP-Rule" id="MF_00118"/>
    </source>
</evidence>
<organism>
    <name type="scientific">Nitratiruptor sp. (strain SB155-2)</name>
    <dbReference type="NCBI Taxonomy" id="387092"/>
    <lineage>
        <taxon>Bacteria</taxon>
        <taxon>Pseudomonadati</taxon>
        <taxon>Campylobacterota</taxon>
        <taxon>Epsilonproteobacteria</taxon>
        <taxon>Nautiliales</taxon>
        <taxon>Nitratiruptoraceae</taxon>
        <taxon>Nitratiruptor</taxon>
    </lineage>
</organism>
<protein>
    <recommendedName>
        <fullName evidence="2">Elongation factor Tu</fullName>
        <shortName evidence="2">EF-Tu</shortName>
        <ecNumber evidence="2">3.6.5.3</ecNumber>
    </recommendedName>
</protein>
<feature type="chain" id="PRO_1000015712" description="Elongation factor Tu">
    <location>
        <begin position="1"/>
        <end position="399"/>
    </location>
</feature>
<feature type="domain" description="tr-type G">
    <location>
        <begin position="10"/>
        <end position="209"/>
    </location>
</feature>
<feature type="region of interest" description="G1" evidence="1">
    <location>
        <begin position="19"/>
        <end position="26"/>
    </location>
</feature>
<feature type="region of interest" description="G2" evidence="1">
    <location>
        <begin position="60"/>
        <end position="64"/>
    </location>
</feature>
<feature type="region of interest" description="G3" evidence="1">
    <location>
        <begin position="81"/>
        <end position="84"/>
    </location>
</feature>
<feature type="region of interest" description="G4" evidence="1">
    <location>
        <begin position="136"/>
        <end position="139"/>
    </location>
</feature>
<feature type="region of interest" description="G5" evidence="1">
    <location>
        <begin position="174"/>
        <end position="176"/>
    </location>
</feature>
<feature type="binding site" evidence="2">
    <location>
        <begin position="19"/>
        <end position="26"/>
    </location>
    <ligand>
        <name>GTP</name>
        <dbReference type="ChEBI" id="CHEBI:37565"/>
    </ligand>
</feature>
<feature type="binding site" evidence="2">
    <location>
        <position position="26"/>
    </location>
    <ligand>
        <name>Mg(2+)</name>
        <dbReference type="ChEBI" id="CHEBI:18420"/>
    </ligand>
</feature>
<feature type="binding site" evidence="2">
    <location>
        <begin position="81"/>
        <end position="85"/>
    </location>
    <ligand>
        <name>GTP</name>
        <dbReference type="ChEBI" id="CHEBI:37565"/>
    </ligand>
</feature>
<feature type="binding site" evidence="2">
    <location>
        <begin position="136"/>
        <end position="139"/>
    </location>
    <ligand>
        <name>GTP</name>
        <dbReference type="ChEBI" id="CHEBI:37565"/>
    </ligand>
</feature>
<reference key="1">
    <citation type="journal article" date="2007" name="Proc. Natl. Acad. Sci. U.S.A.">
        <title>Deep-sea vent epsilon-proteobacterial genomes provide insights into emergence of pathogens.</title>
        <authorList>
            <person name="Nakagawa S."/>
            <person name="Takaki Y."/>
            <person name="Shimamura S."/>
            <person name="Reysenbach A.-L."/>
            <person name="Takai K."/>
            <person name="Horikoshi K."/>
        </authorList>
    </citation>
    <scope>NUCLEOTIDE SEQUENCE [LARGE SCALE GENOMIC DNA]</scope>
    <source>
        <strain>SB155-2</strain>
    </source>
</reference>